<gene>
    <name type="primary">unc-104</name>
    <name type="ORF">C52E12.2</name>
</gene>
<evidence type="ECO:0000255" key="1"/>
<evidence type="ECO:0000255" key="2">
    <source>
        <dbReference type="PROSITE-ProRule" id="PRU00145"/>
    </source>
</evidence>
<evidence type="ECO:0000255" key="3">
    <source>
        <dbReference type="PROSITE-ProRule" id="PRU00283"/>
    </source>
</evidence>
<evidence type="ECO:0000256" key="4">
    <source>
        <dbReference type="SAM" id="MobiDB-lite"/>
    </source>
</evidence>
<evidence type="ECO:0000269" key="5">
    <source>
    </source>
</evidence>
<evidence type="ECO:0000269" key="6">
    <source>
    </source>
</evidence>
<evidence type="ECO:0000269" key="7">
    <source>
    </source>
</evidence>
<evidence type="ECO:0000269" key="8">
    <source>
    </source>
</evidence>
<evidence type="ECO:0000269" key="9">
    <source>
    </source>
</evidence>
<evidence type="ECO:0000269" key="10">
    <source>
    </source>
</evidence>
<evidence type="ECO:0000269" key="11">
    <source>
    </source>
</evidence>
<evidence type="ECO:0000305" key="12"/>
<dbReference type="EMBL" id="M58582">
    <property type="protein sequence ID" value="AAA03517.1"/>
    <property type="molecule type" value="mRNA"/>
</dbReference>
<dbReference type="EMBL" id="BX284602">
    <property type="protein sequence ID" value="CCD64622.2"/>
    <property type="molecule type" value="Genomic_DNA"/>
</dbReference>
<dbReference type="EMBL" id="BX284602">
    <property type="protein sequence ID" value="CCD64623.2"/>
    <property type="molecule type" value="Genomic_DNA"/>
</dbReference>
<dbReference type="PIR" id="JN0114">
    <property type="entry name" value="JN0114"/>
</dbReference>
<dbReference type="RefSeq" id="NP_001022041.2">
    <molecule id="P23678-2"/>
    <property type="nucleotide sequence ID" value="NM_001026870.7"/>
</dbReference>
<dbReference type="RefSeq" id="NP_741019.3">
    <molecule id="P23678-1"/>
    <property type="nucleotide sequence ID" value="NM_171017.10"/>
</dbReference>
<dbReference type="SMR" id="P23678"/>
<dbReference type="BioGRID" id="39482">
    <property type="interactions" value="16"/>
</dbReference>
<dbReference type="DIP" id="DIP-49010N"/>
<dbReference type="FunCoup" id="P23678">
    <property type="interactions" value="902"/>
</dbReference>
<dbReference type="IntAct" id="P23678">
    <property type="interactions" value="1"/>
</dbReference>
<dbReference type="STRING" id="6239.C52E12.2b.2"/>
<dbReference type="iPTMnet" id="P23678"/>
<dbReference type="PaxDb" id="6239-C52E12.2b"/>
<dbReference type="PeptideAtlas" id="P23678"/>
<dbReference type="EnsemblMetazoa" id="C52E12.2a.1">
    <molecule id="P23678-1"/>
    <property type="protein sequence ID" value="C52E12.2a.1"/>
    <property type="gene ID" value="WBGene00006831"/>
</dbReference>
<dbReference type="EnsemblMetazoa" id="C52E12.2a.2">
    <molecule id="P23678-1"/>
    <property type="protein sequence ID" value="C52E12.2a.2"/>
    <property type="gene ID" value="WBGene00006831"/>
</dbReference>
<dbReference type="EnsemblMetazoa" id="C52E12.2b.1">
    <molecule id="P23678-2"/>
    <property type="protein sequence ID" value="C52E12.2b.1"/>
    <property type="gene ID" value="WBGene00006831"/>
</dbReference>
<dbReference type="GeneID" id="174144"/>
<dbReference type="KEGG" id="cel:CELE_C52E12.2"/>
<dbReference type="UCSC" id="C52E12.2a">
    <molecule id="P23678-1"/>
    <property type="organism name" value="c. elegans"/>
</dbReference>
<dbReference type="AGR" id="WB:WBGene00006831"/>
<dbReference type="CTD" id="36876"/>
<dbReference type="WormBase" id="C52E12.2a">
    <molecule id="P23678-1"/>
    <property type="protein sequence ID" value="CE48050"/>
    <property type="gene ID" value="WBGene00006831"/>
    <property type="gene designation" value="unc-104"/>
</dbReference>
<dbReference type="WormBase" id="C52E12.2b">
    <molecule id="P23678-2"/>
    <property type="protein sequence ID" value="CE47855"/>
    <property type="gene ID" value="WBGene00006831"/>
    <property type="gene designation" value="unc-104"/>
</dbReference>
<dbReference type="eggNOG" id="KOG0245">
    <property type="taxonomic scope" value="Eukaryota"/>
</dbReference>
<dbReference type="GeneTree" id="ENSGT00940000168546"/>
<dbReference type="HOGENOM" id="CLU_001485_10_0_1"/>
<dbReference type="InParanoid" id="P23678"/>
<dbReference type="OMA" id="IKITICH"/>
<dbReference type="OrthoDB" id="3176171at2759"/>
<dbReference type="Reactome" id="R-CEL-6811434">
    <property type="pathway name" value="COPI-dependent Golgi-to-ER retrograde traffic"/>
</dbReference>
<dbReference type="Reactome" id="R-CEL-983189">
    <property type="pathway name" value="Kinesins"/>
</dbReference>
<dbReference type="PRO" id="PR:P23678"/>
<dbReference type="Proteomes" id="UP000001940">
    <property type="component" value="Chromosome II"/>
</dbReference>
<dbReference type="Bgee" id="WBGene00006831">
    <property type="expression patterns" value="Expressed in larva and 3 other cell types or tissues"/>
</dbReference>
<dbReference type="GO" id="GO:0030424">
    <property type="term" value="C:axon"/>
    <property type="evidence" value="ECO:0000314"/>
    <property type="project" value="WormBase"/>
</dbReference>
<dbReference type="GO" id="GO:1904115">
    <property type="term" value="C:axon cytoplasm"/>
    <property type="evidence" value="ECO:0007669"/>
    <property type="project" value="GOC"/>
</dbReference>
<dbReference type="GO" id="GO:0005737">
    <property type="term" value="C:cytoplasm"/>
    <property type="evidence" value="ECO:0000318"/>
    <property type="project" value="GO_Central"/>
</dbReference>
<dbReference type="GO" id="GO:0030425">
    <property type="term" value="C:dendrite"/>
    <property type="evidence" value="ECO:0000314"/>
    <property type="project" value="WormBase"/>
</dbReference>
<dbReference type="GO" id="GO:0005871">
    <property type="term" value="C:kinesin complex"/>
    <property type="evidence" value="ECO:0000318"/>
    <property type="project" value="GO_Central"/>
</dbReference>
<dbReference type="GO" id="GO:0005874">
    <property type="term" value="C:microtubule"/>
    <property type="evidence" value="ECO:0000318"/>
    <property type="project" value="GO_Central"/>
</dbReference>
<dbReference type="GO" id="GO:0043025">
    <property type="term" value="C:neuronal cell body"/>
    <property type="evidence" value="ECO:0000314"/>
    <property type="project" value="WormBase"/>
</dbReference>
<dbReference type="GO" id="GO:0005886">
    <property type="term" value="C:plasma membrane"/>
    <property type="evidence" value="ECO:0007669"/>
    <property type="project" value="GOC"/>
</dbReference>
<dbReference type="GO" id="GO:0098793">
    <property type="term" value="C:presynapse"/>
    <property type="evidence" value="ECO:0000314"/>
    <property type="project" value="WormBase"/>
</dbReference>
<dbReference type="GO" id="GO:0005524">
    <property type="term" value="F:ATP binding"/>
    <property type="evidence" value="ECO:0007669"/>
    <property type="project" value="UniProtKB-KW"/>
</dbReference>
<dbReference type="GO" id="GO:0016887">
    <property type="term" value="F:ATP hydrolysis activity"/>
    <property type="evidence" value="ECO:0000318"/>
    <property type="project" value="GO_Central"/>
</dbReference>
<dbReference type="GO" id="GO:0008017">
    <property type="term" value="F:microtubule binding"/>
    <property type="evidence" value="ECO:0000314"/>
    <property type="project" value="WormBase"/>
</dbReference>
<dbReference type="GO" id="GO:0005546">
    <property type="term" value="F:phosphatidylinositol-4,5-bisphosphate binding"/>
    <property type="evidence" value="ECO:0000314"/>
    <property type="project" value="WormBase"/>
</dbReference>
<dbReference type="GO" id="GO:0070273">
    <property type="term" value="F:phosphatidylinositol-4-phosphate binding"/>
    <property type="evidence" value="ECO:0000314"/>
    <property type="project" value="WormBase"/>
</dbReference>
<dbReference type="GO" id="GO:0008574">
    <property type="term" value="F:plus-end-directed microtubule motor activity"/>
    <property type="evidence" value="ECO:0000314"/>
    <property type="project" value="WormBase"/>
</dbReference>
<dbReference type="GO" id="GO:0048156">
    <property type="term" value="F:tau protein binding"/>
    <property type="evidence" value="ECO:0000353"/>
    <property type="project" value="WormBase"/>
</dbReference>
<dbReference type="GO" id="GO:0008089">
    <property type="term" value="P:anterograde axonal transport"/>
    <property type="evidence" value="ECO:0000315"/>
    <property type="project" value="UniProtKB"/>
</dbReference>
<dbReference type="GO" id="GO:0048490">
    <property type="term" value="P:anterograde synaptic vesicle transport"/>
    <property type="evidence" value="ECO:0000314"/>
    <property type="project" value="WormBase"/>
</dbReference>
<dbReference type="GO" id="GO:0007155">
    <property type="term" value="P:cell adhesion"/>
    <property type="evidence" value="ECO:0007669"/>
    <property type="project" value="UniProtKB-KW"/>
</dbReference>
<dbReference type="GO" id="GO:0051301">
    <property type="term" value="P:cell division"/>
    <property type="evidence" value="ECO:0007669"/>
    <property type="project" value="UniProtKB-KW"/>
</dbReference>
<dbReference type="GO" id="GO:0030421">
    <property type="term" value="P:defecation"/>
    <property type="evidence" value="ECO:0000315"/>
    <property type="project" value="WormBase"/>
</dbReference>
<dbReference type="GO" id="GO:0007631">
    <property type="term" value="P:feeding behavior"/>
    <property type="evidence" value="ECO:0000315"/>
    <property type="project" value="WormBase"/>
</dbReference>
<dbReference type="GO" id="GO:0007018">
    <property type="term" value="P:microtubule-based movement"/>
    <property type="evidence" value="ECO:0000314"/>
    <property type="project" value="WormBase"/>
</dbReference>
<dbReference type="GO" id="GO:0018996">
    <property type="term" value="P:molting cycle, collagen and cuticulin-based cuticle"/>
    <property type="evidence" value="ECO:0000315"/>
    <property type="project" value="WormBase"/>
</dbReference>
<dbReference type="GO" id="GO:0070266">
    <property type="term" value="P:necroptotic process"/>
    <property type="evidence" value="ECO:0000316"/>
    <property type="project" value="WormBase"/>
</dbReference>
<dbReference type="GO" id="GO:1904810">
    <property type="term" value="P:negative regulation of dense core granule transport"/>
    <property type="evidence" value="ECO:0000315"/>
    <property type="project" value="UniProtKB"/>
</dbReference>
<dbReference type="GO" id="GO:0002119">
    <property type="term" value="P:nematode larval development"/>
    <property type="evidence" value="ECO:0000315"/>
    <property type="project" value="WormBase"/>
</dbReference>
<dbReference type="GO" id="GO:0016322">
    <property type="term" value="P:neuron remodeling"/>
    <property type="evidence" value="ECO:0000315"/>
    <property type="project" value="UniProtKB"/>
</dbReference>
<dbReference type="GO" id="GO:0007270">
    <property type="term" value="P:neuron-neuron synaptic transmission"/>
    <property type="evidence" value="ECO:0000315"/>
    <property type="project" value="WormBase"/>
</dbReference>
<dbReference type="GO" id="GO:1905488">
    <property type="term" value="P:positive regulation of anterior/posterior axon guidance"/>
    <property type="evidence" value="ECO:0000315"/>
    <property type="project" value="UniProtKB"/>
</dbReference>
<dbReference type="GO" id="GO:1901953">
    <property type="term" value="P:positive regulation of anterograde dense core granule transport"/>
    <property type="evidence" value="ECO:0000315"/>
    <property type="project" value="UniProtKB"/>
</dbReference>
<dbReference type="GO" id="GO:0040010">
    <property type="term" value="P:positive regulation of growth rate"/>
    <property type="evidence" value="ECO:0000315"/>
    <property type="project" value="WormBase"/>
</dbReference>
<dbReference type="GO" id="GO:0090316">
    <property type="term" value="P:positive regulation of intracellular protein transport"/>
    <property type="evidence" value="ECO:0000315"/>
    <property type="project" value="UniProtKB"/>
</dbReference>
<dbReference type="GO" id="GO:0040018">
    <property type="term" value="P:positive regulation of multicellular organism growth"/>
    <property type="evidence" value="ECO:0000315"/>
    <property type="project" value="WormBase"/>
</dbReference>
<dbReference type="GO" id="GO:1903746">
    <property type="term" value="P:positive regulation of nematode pharyngeal pumping"/>
    <property type="evidence" value="ECO:0000315"/>
    <property type="project" value="WormBase"/>
</dbReference>
<dbReference type="GO" id="GO:1905608">
    <property type="term" value="P:positive regulation of presynapse assembly"/>
    <property type="evidence" value="ECO:0000315"/>
    <property type="project" value="UniProtKB"/>
</dbReference>
<dbReference type="GO" id="GO:0051965">
    <property type="term" value="P:positive regulation of synapse assembly"/>
    <property type="evidence" value="ECO:0000315"/>
    <property type="project" value="UniProtKB"/>
</dbReference>
<dbReference type="GO" id="GO:0045887">
    <property type="term" value="P:positive regulation of synaptic assembly at neuromuscular junction"/>
    <property type="evidence" value="ECO:0000315"/>
    <property type="project" value="WormBase"/>
</dbReference>
<dbReference type="GO" id="GO:0043113">
    <property type="term" value="P:receptor clustering"/>
    <property type="evidence" value="ECO:0000315"/>
    <property type="project" value="WormBase"/>
</dbReference>
<dbReference type="GO" id="GO:0045055">
    <property type="term" value="P:regulated exocytosis"/>
    <property type="evidence" value="ECO:0000315"/>
    <property type="project" value="WormBase"/>
</dbReference>
<dbReference type="GO" id="GO:0030516">
    <property type="term" value="P:regulation of axon extension"/>
    <property type="evidence" value="ECO:0000315"/>
    <property type="project" value="WormBase"/>
</dbReference>
<dbReference type="GO" id="GO:1902473">
    <property type="term" value="P:regulation of protein localization to synapse"/>
    <property type="evidence" value="ECO:0000315"/>
    <property type="project" value="UniProtKB"/>
</dbReference>
<dbReference type="GO" id="GO:0006942">
    <property type="term" value="P:regulation of striated muscle contraction"/>
    <property type="evidence" value="ECO:0000315"/>
    <property type="project" value="WormBase"/>
</dbReference>
<dbReference type="GO" id="GO:0050807">
    <property type="term" value="P:regulation of synapse organization"/>
    <property type="evidence" value="ECO:0000316"/>
    <property type="project" value="UniProtKB"/>
</dbReference>
<dbReference type="GO" id="GO:0022414">
    <property type="term" value="P:reproductive process"/>
    <property type="evidence" value="ECO:0000315"/>
    <property type="project" value="WormBase"/>
</dbReference>
<dbReference type="GO" id="GO:1990049">
    <property type="term" value="P:retrograde neuronal dense core vesicle transport"/>
    <property type="evidence" value="ECO:0000318"/>
    <property type="project" value="GO_Central"/>
</dbReference>
<dbReference type="GO" id="GO:0007271">
    <property type="term" value="P:synaptic transmission, cholinergic"/>
    <property type="evidence" value="ECO:0000315"/>
    <property type="project" value="WormBase"/>
</dbReference>
<dbReference type="GO" id="GO:0007419">
    <property type="term" value="P:ventral cord development"/>
    <property type="evidence" value="ECO:0000315"/>
    <property type="project" value="UniProtKB"/>
</dbReference>
<dbReference type="GO" id="GO:0016192">
    <property type="term" value="P:vesicle-mediated transport"/>
    <property type="evidence" value="ECO:0000315"/>
    <property type="project" value="WormBase"/>
</dbReference>
<dbReference type="CDD" id="cd22705">
    <property type="entry name" value="FHA_KIF1"/>
    <property type="match status" value="1"/>
</dbReference>
<dbReference type="CDD" id="cd01365">
    <property type="entry name" value="KISc_KIF1A_KIF1B"/>
    <property type="match status" value="1"/>
</dbReference>
<dbReference type="CDD" id="cd01233">
    <property type="entry name" value="PH_KIFIA_KIFIB"/>
    <property type="match status" value="1"/>
</dbReference>
<dbReference type="FunFam" id="2.60.200.20:FF:000001">
    <property type="entry name" value="Kinesin family member 1B"/>
    <property type="match status" value="1"/>
</dbReference>
<dbReference type="FunFam" id="3.40.850.10:FF:000047">
    <property type="entry name" value="Kinesin family protein"/>
    <property type="match status" value="1"/>
</dbReference>
<dbReference type="FunFam" id="2.30.29.30:FF:000204">
    <property type="entry name" value="kinesin-like protein unc-104 isoform X6"/>
    <property type="match status" value="1"/>
</dbReference>
<dbReference type="Gene3D" id="2.60.200.20">
    <property type="match status" value="1"/>
</dbReference>
<dbReference type="Gene3D" id="6.10.250.2520">
    <property type="match status" value="1"/>
</dbReference>
<dbReference type="Gene3D" id="3.40.850.10">
    <property type="entry name" value="Kinesin motor domain"/>
    <property type="match status" value="1"/>
</dbReference>
<dbReference type="Gene3D" id="2.30.29.30">
    <property type="entry name" value="Pleckstrin-homology domain (PH domain)/Phosphotyrosine-binding domain (PTB)"/>
    <property type="match status" value="1"/>
</dbReference>
<dbReference type="InterPro" id="IPR000253">
    <property type="entry name" value="FHA_dom"/>
</dbReference>
<dbReference type="InterPro" id="IPR022164">
    <property type="entry name" value="Kinesin-like"/>
</dbReference>
<dbReference type="InterPro" id="IPR022140">
    <property type="entry name" value="Kinesin-like_KIF1-typ"/>
</dbReference>
<dbReference type="InterPro" id="IPR032405">
    <property type="entry name" value="Kinesin_assoc"/>
</dbReference>
<dbReference type="InterPro" id="IPR019821">
    <property type="entry name" value="Kinesin_motor_CS"/>
</dbReference>
<dbReference type="InterPro" id="IPR001752">
    <property type="entry name" value="Kinesin_motor_dom"/>
</dbReference>
<dbReference type="InterPro" id="IPR036961">
    <property type="entry name" value="Kinesin_motor_dom_sf"/>
</dbReference>
<dbReference type="InterPro" id="IPR027417">
    <property type="entry name" value="P-loop_NTPase"/>
</dbReference>
<dbReference type="InterPro" id="IPR011993">
    <property type="entry name" value="PH-like_dom_sf"/>
</dbReference>
<dbReference type="InterPro" id="IPR001849">
    <property type="entry name" value="PH_domain"/>
</dbReference>
<dbReference type="InterPro" id="IPR049780">
    <property type="entry name" value="PH_KIFIA_KIFIB"/>
</dbReference>
<dbReference type="InterPro" id="IPR008984">
    <property type="entry name" value="SMAD_FHA_dom_sf"/>
</dbReference>
<dbReference type="PANTHER" id="PTHR47117:SF10">
    <property type="entry name" value="KINESIN-LIKE PROTEIN KIF1B"/>
    <property type="match status" value="1"/>
</dbReference>
<dbReference type="PANTHER" id="PTHR47117">
    <property type="entry name" value="STAR-RELATED LIPID TRANSFER PROTEIN 9"/>
    <property type="match status" value="1"/>
</dbReference>
<dbReference type="Pfam" id="PF12473">
    <property type="entry name" value="DUF3694"/>
    <property type="match status" value="1"/>
</dbReference>
<dbReference type="Pfam" id="PF00498">
    <property type="entry name" value="FHA"/>
    <property type="match status" value="1"/>
</dbReference>
<dbReference type="Pfam" id="PF12423">
    <property type="entry name" value="KIF1B"/>
    <property type="match status" value="1"/>
</dbReference>
<dbReference type="Pfam" id="PF00225">
    <property type="entry name" value="Kinesin"/>
    <property type="match status" value="1"/>
</dbReference>
<dbReference type="Pfam" id="PF16183">
    <property type="entry name" value="Kinesin_assoc"/>
    <property type="match status" value="2"/>
</dbReference>
<dbReference type="Pfam" id="PF00169">
    <property type="entry name" value="PH"/>
    <property type="match status" value="1"/>
</dbReference>
<dbReference type="PRINTS" id="PR00380">
    <property type="entry name" value="KINESINHEAVY"/>
</dbReference>
<dbReference type="SMART" id="SM00240">
    <property type="entry name" value="FHA"/>
    <property type="match status" value="1"/>
</dbReference>
<dbReference type="SMART" id="SM00129">
    <property type="entry name" value="KISc"/>
    <property type="match status" value="1"/>
</dbReference>
<dbReference type="SMART" id="SM00233">
    <property type="entry name" value="PH"/>
    <property type="match status" value="1"/>
</dbReference>
<dbReference type="SUPFAM" id="SSF52540">
    <property type="entry name" value="P-loop containing nucleoside triphosphate hydrolases"/>
    <property type="match status" value="1"/>
</dbReference>
<dbReference type="SUPFAM" id="SSF50729">
    <property type="entry name" value="PH domain-like"/>
    <property type="match status" value="1"/>
</dbReference>
<dbReference type="SUPFAM" id="SSF49879">
    <property type="entry name" value="SMAD/FHA domain"/>
    <property type="match status" value="1"/>
</dbReference>
<dbReference type="PROSITE" id="PS00411">
    <property type="entry name" value="KINESIN_MOTOR_1"/>
    <property type="match status" value="1"/>
</dbReference>
<dbReference type="PROSITE" id="PS50067">
    <property type="entry name" value="KINESIN_MOTOR_2"/>
    <property type="match status" value="1"/>
</dbReference>
<dbReference type="PROSITE" id="PS50003">
    <property type="entry name" value="PH_DOMAIN"/>
    <property type="match status" value="1"/>
</dbReference>
<organism>
    <name type="scientific">Caenorhabditis elegans</name>
    <dbReference type="NCBI Taxonomy" id="6239"/>
    <lineage>
        <taxon>Eukaryota</taxon>
        <taxon>Metazoa</taxon>
        <taxon>Ecdysozoa</taxon>
        <taxon>Nematoda</taxon>
        <taxon>Chromadorea</taxon>
        <taxon>Rhabditida</taxon>
        <taxon>Rhabditina</taxon>
        <taxon>Rhabditomorpha</taxon>
        <taxon>Rhabditoidea</taxon>
        <taxon>Rhabditidae</taxon>
        <taxon>Peloderinae</taxon>
        <taxon>Caenorhabditis</taxon>
    </lineage>
</organism>
<sequence>MSSVKVAVRVRPFNQREISNTSKCVLQVNGNTTTINGHSINKENFSFNFDHSYWSFARNDPHFITQKQVYEELGVEMLEHAFEGYNVCIFAYGQTGSGKSYTMMGKANDPDEMGIIPRLCNDLFARIDNNNDKDVQYSVEVSYMEIYCERVKDLLNPNSGGNLRVREHPLLGPYVDDLTKMAVCSYHDICNLMDEGNKARTVAATNMNSTSSRSHAVFTIVLTQKRHCADSNLDTEKHSKISLVDLAGSERANSTGAEGQRLKEGANINKSLTTLGLVISKLAEESTKKKKSNKGVIPYRDSVLTWLLRENLGGNSKTAMLAALSPADINFDETLSTLRYADRAKQIVCQAVVNEDPNAKLIRELNEEVIKLRHILKDKGIDVTDVQETPGKHKKGPKLPAHVHEQLEKLQESEKLMAEIGKTWEQKLIHTEEIRKQREEELRDMGLACAEDGTTLGVFSPKKLPHLVNLNEDPLMSECLIYYLKEGVTSVGRPEAEHRPDILLSGEAILELHCEFINEDGNVTLTMKPNASCYINGKQVTTPTVLHTGSRVILGEHHVFRYNDPQEARQSRHNLAAIAEQPIDWKYAQQELLDKQGIDLKADMEKKMLEMESQYRREKVELEQKMYHQTREYESMIENLQKQVDLAQSYISGGGSIWEGERMLTSSLLEFPEELKWTSDQKRVVLKAAIKWRYHQFTSVRDDLWGNAIFVKEANAISVELKKKVQFQFALLTDTMYSPLPPDLLPPGEDLTLRPYPKTVVAIQVQDLKNGATHYWSIEKLKQRLEAMRDMYETDAEMSPADGDPMMDALMGTDPFYDRFPWFRMVGRAFVYLNNLLHNVPLIHKVAVVNEKGEVKGYLKVAIEPVQKDEVINQKKGVRQTAKLHFRKEDFLKSHKNGETSDSDALAFPEHMQEEVEFCFRVVVLQAIDVADTYSDVFCQFNFLHRHDEAFSTEPMKNSKSPLTFEHTQNLHIKMSKTFLHYLHHFPIIFEVFGHFQPKSEQFNFERQNSALGRRLSTKLTFQQPSLVISTPVKSKKANAPIQNNNASVKSKHDLLVWFEICELANNGEYVPTIVDHAQGLPTHGIFLLHQGIQRRIKITICHEKGELKWKDCQELVVGRIRAGPEWAGGDDVDVLSLGLFPGTFMEFSMDDRTFFQFEAAWDSSLHNSPLLNRVSNYGDQIYMTLSAYMELDGCAQPAVVTKDLCLLIYARDSKISAASRFCRSLVGGISKSPEMNRVPGVYQLCLKDGSDSGSPGAIRRQRRVLDTSSAYVRGEENLGQWRPRGDSLIFEHQWELEKLTRLQQVERVRLFLRLRDRLKGKKNKGEARTPVSPCDPVCAIPESIKLDEKDKGIVGKVLGLIRRKIPMNKDPPTGNKAQELSDESGSNSITSPVSDKSLIKSSRSSDLLCRQKSKSDQNLASNDDIVDNLGGMKRSLSGSRILQLNILVPEVLEERVGVVVSKKGYMNFLEEKTQGWTRRWVIVRRPYILLFRDDRDLVIRGIINLANARIEHSEDQQAMVKVPNTFSVCTNQRGFLMQMMPGDEMYDWLYAINPLMAGQMKLHGNQNGTTLKSPTSSSSIAAS</sequence>
<keyword id="KW-0025">Alternative splicing</keyword>
<keyword id="KW-0067">ATP-binding</keyword>
<keyword id="KW-0106">Calcium</keyword>
<keyword id="KW-0130">Cell adhesion</keyword>
<keyword id="KW-0131">Cell cycle</keyword>
<keyword id="KW-0132">Cell division</keyword>
<keyword id="KW-0966">Cell projection</keyword>
<keyword id="KW-0175">Coiled coil</keyword>
<keyword id="KW-0963">Cytoplasm</keyword>
<keyword id="KW-0206">Cytoskeleton</keyword>
<keyword id="KW-0493">Microtubule</keyword>
<keyword id="KW-0505">Motor protein</keyword>
<keyword id="KW-1210">Necrosis</keyword>
<keyword id="KW-0524">Neurogenesis</keyword>
<keyword id="KW-0547">Nucleotide-binding</keyword>
<keyword id="KW-1185">Reference proteome</keyword>
<keyword id="KW-0677">Repeat</keyword>
<keyword id="KW-0813">Transport</keyword>
<feature type="chain" id="PRO_0000125413" description="Kinesin-like protein unc-104">
    <location>
        <begin position="1"/>
        <end position="1584"/>
    </location>
</feature>
<feature type="domain" description="Kinesin motor" evidence="3">
    <location>
        <begin position="3"/>
        <end position="347"/>
    </location>
</feature>
<feature type="domain" description="PH" evidence="2">
    <location>
        <begin position="1460"/>
        <end position="1558"/>
    </location>
</feature>
<feature type="region of interest" description="Microtubule-binding">
    <location>
        <begin position="183"/>
        <end position="335"/>
    </location>
</feature>
<feature type="region of interest" description="Disordered" evidence="4">
    <location>
        <begin position="1366"/>
        <end position="1416"/>
    </location>
</feature>
<feature type="coiled-coil region" evidence="1">
    <location>
        <begin position="425"/>
        <end position="445"/>
    </location>
</feature>
<feature type="coiled-coil region" evidence="1">
    <location>
        <begin position="598"/>
        <end position="652"/>
    </location>
</feature>
<feature type="coiled-coil region" evidence="1">
    <location>
        <begin position="777"/>
        <end position="797"/>
    </location>
</feature>
<feature type="compositionally biased region" description="Polar residues" evidence="4">
    <location>
        <begin position="1376"/>
        <end position="1394"/>
    </location>
</feature>
<feature type="compositionally biased region" description="Low complexity" evidence="4">
    <location>
        <begin position="1395"/>
        <end position="1409"/>
    </location>
</feature>
<feature type="binding site" evidence="3">
    <location>
        <begin position="93"/>
        <end position="100"/>
    </location>
    <ligand>
        <name>ATP</name>
        <dbReference type="ChEBI" id="CHEBI:30616"/>
    </ligand>
</feature>
<feature type="splice variant" id="VSP_011760" description="In isoform b." evidence="12">
    <original>E</original>
    <variation>EDMRIFYNSELSVAGTPVDVPYPPVAEGWLAALNRNSARLIPDRQRLE</variation>
    <location>
        <position position="786"/>
    </location>
</feature>
<feature type="splice variant" id="VSP_011761" description="In isoform b." evidence="12">
    <location>
        <begin position="1255"/>
        <end position="1257"/>
    </location>
</feature>
<feature type="sequence variant">
    <original>I</original>
    <variation>T</variation>
    <location>
        <position position="598"/>
    </location>
</feature>
<feature type="sequence variant">
    <original>V</original>
    <variation>M</variation>
    <location>
        <position position="930"/>
    </location>
</feature>
<feature type="mutagenesis site" description="In e1265; mislocalized presynaptic proteins to dendrites in PVD neurons. increased survival in response to hypoxia induced by sodium azide. Abnormal accumulation of egl-21, egl-3, FMRFamide-like peptides (FaRPs) and snb-1 in neuronal cell bodies. Reduced number of neuron cell corpses in a hyperactive mec-4 or deg-3 mutant background." evidence="5 9 10">
    <original>D</original>
    <variation>N</variation>
    <location>
        <position position="1497"/>
    </location>
</feature>
<feature type="sequence conflict" description="In Ref. 1; AAA03517." evidence="12" ref="1">
    <original>A</original>
    <variation>R</variation>
    <location>
        <position position="905"/>
    </location>
</feature>
<name>UN104_CAEEL</name>
<protein>
    <recommendedName>
        <fullName>Kinesin-like protein unc-104</fullName>
    </recommendedName>
    <alternativeName>
        <fullName>Uncoordinated protein 104</fullName>
    </alternativeName>
</protein>
<reference key="1">
    <citation type="journal article" date="1991" name="Neuron">
        <title>The C. elegans unc-104 gene encodes a putative kinesin heavy chain-like protein.</title>
        <authorList>
            <person name="Otsuka A.J."/>
            <person name="Jeyaprakash A."/>
            <person name="Garcia-Anoveros J."/>
            <person name="Tang L.Z."/>
            <person name="Fisk G."/>
            <person name="Hartshorne T."/>
            <person name="Franco R."/>
            <person name="Born T."/>
        </authorList>
    </citation>
    <scope>NUCLEOTIDE SEQUENCE [MRNA] (ISOFORM A)</scope>
    <scope>FUNCTION</scope>
    <scope>DISRUPTION PHENOTYPE</scope>
</reference>
<reference key="2">
    <citation type="journal article" date="1998" name="Science">
        <title>Genome sequence of the nematode C. elegans: a platform for investigating biology.</title>
        <authorList>
            <consortium name="The C. elegans sequencing consortium"/>
        </authorList>
    </citation>
    <scope>NUCLEOTIDE SEQUENCE [LARGE SCALE GENOMIC DNA]</scope>
    <scope>ALTERNATIVE SPLICING</scope>
    <source>
        <strain>Bristol N2</strain>
    </source>
</reference>
<reference key="3">
    <citation type="journal article" date="2003" name="J. Neurosci.">
        <title>The EGL-21 carboxypeptidase E facilitates acetylcholine release at Caenorhabditis elegans neuromuscular junctions.</title>
        <authorList>
            <person name="Jacob T.C."/>
            <person name="Kaplan J.M."/>
        </authorList>
    </citation>
    <scope>FUNCTION</scope>
    <scope>MUTAGENESIS OF ASP-1497</scope>
</reference>
<reference key="4">
    <citation type="journal article" date="2010" name="Cell">
        <title>Two cyclin-dependent kinase pathways are essential for polarized trafficking of presynaptic components.</title>
        <authorList>
            <person name="Ou C.Y."/>
            <person name="Poon V.Y."/>
            <person name="Maeder C.I."/>
            <person name="Watanabe S."/>
            <person name="Lehrman E.K."/>
            <person name="Fu A.K."/>
            <person name="Park M."/>
            <person name="Fu W.Y."/>
            <person name="Jorgensen E.M."/>
            <person name="Ip N.Y."/>
            <person name="Shen K."/>
        </authorList>
    </citation>
    <scope>FUNCTION</scope>
</reference>
<reference key="5">
    <citation type="journal article" date="2011" name="Nat. Neurosci.">
        <title>UNC-33 (CRMP) and ankyrin organize microtubules and localize kinesin to polarize axon-dendrite sorting.</title>
        <authorList>
            <person name="Maniar T.A."/>
            <person name="Kaplan M."/>
            <person name="Wang G.J."/>
            <person name="Shen K."/>
            <person name="Wei L."/>
            <person name="Shaw J.E."/>
            <person name="Koushika S.P."/>
            <person name="Bargmann C.I."/>
        </authorList>
    </citation>
    <scope>FUNCTION</scope>
    <scope>SUBCELLULAR LOCATION</scope>
    <scope>TISSUE SPECIFICITY</scope>
    <scope>MUTAGENESIS OF ASP-1497</scope>
</reference>
<reference key="6">
    <citation type="journal article" date="2011" name="Neuron">
        <title>CYY-1/cyclin Y and CDK-5 differentially regulate synapse elimination and formation for rewiring neural circuits.</title>
        <authorList>
            <person name="Park M."/>
            <person name="Watanabe S."/>
            <person name="Poon V.Y."/>
            <person name="Ou C.Y."/>
            <person name="Jorgensen E.M."/>
            <person name="Shen K."/>
        </authorList>
    </citation>
    <scope>FUNCTION</scope>
</reference>
<reference key="7">
    <citation type="journal article" date="2012" name="EMBO J.">
        <title>Endocytosis and intracellular trafficking contribute to necrotic neurodegeneration in C. elegans.</title>
        <authorList>
            <person name="Troulinaki K."/>
            <person name="Tavernarakis N."/>
        </authorList>
    </citation>
    <scope>FUNCTION</scope>
    <scope>MUTAGENESIS OF ASP-1497</scope>
</reference>
<reference key="8">
    <citation type="journal article" date="2018" name="PLoS Genet.">
        <title>The C-terminal of CASY-1/Calsyntenin regulates GABAergic synaptic transmission at the Caenorhabditis elegans neuromuscular junction.</title>
        <authorList>
            <person name="Thapliyal S."/>
            <person name="Vasudevan A."/>
            <person name="Dong Y."/>
            <person name="Bai J."/>
            <person name="Koushika S.P."/>
            <person name="Babu K."/>
        </authorList>
    </citation>
    <scope>FUNCTION</scope>
    <scope>INTERACTION WITH CASY-1</scope>
</reference>
<accession>P23678</accession>
<accession>Q8MQ97</accession>
<accession>Q8MQ98</accession>
<comment type="function">
    <text evidence="5 6 7 8 9 10 11">Motor protein involved in microtubule-associated anterograde transport (PubMed:1846075, PubMed:29529030). Regulates the transport of synaptic vesicle precursors in the axon of DA motor neurons (PubMed:20510931). Regulates the polarized sorting of axonal proteins (PubMed:22101643). Essential for the transport of synaptic components during the synaptic remodeling of the DD motor neuron, probably downstream of cdk-5 and/or pct-1/cyy-1 complex (PubMed:21609829). Required for the anterograde transport of neuropeptide-containing dense core vesicles along axons (PubMed:12657671). Involved in necrotic cell death (PubMed:22157748).</text>
</comment>
<comment type="subunit">
    <text evidence="11">Interacts with casy-1.</text>
</comment>
<comment type="interaction">
    <interactant intactId="EBI-15812209">
        <id>P23678-1</id>
    </interactant>
    <interactant intactId="EBI-327903">
        <id>Q21049</id>
        <label>syd-2</label>
    </interactant>
    <organismsDiffer>false</organismsDiffer>
    <experiments>9</experiments>
</comment>
<comment type="subcellular location">
    <subcellularLocation>
        <location evidence="12">Cytoplasm</location>
        <location evidence="12">Cytoskeleton</location>
    </subcellularLocation>
    <subcellularLocation>
        <location evidence="9">Cell projection</location>
        <location evidence="9">Axon</location>
    </subcellularLocation>
</comment>
<comment type="alternative products">
    <event type="alternative splicing"/>
    <isoform>
        <id>P23678-1</id>
        <name>a</name>
        <sequence type="displayed"/>
    </isoform>
    <isoform>
        <id>P23678-2</id>
        <name>b</name>
        <sequence type="described" ref="VSP_011760 VSP_011761"/>
    </isoform>
</comment>
<comment type="tissue specificity">
    <text evidence="9">Expressed in nerve ring, amphid commissure and ventral nerve cord (at protein level).</text>
</comment>
<comment type="disruption phenotype">
    <text evidence="6">Worms exhibit uncoordinated and slow movement.</text>
</comment>
<comment type="similarity">
    <text evidence="3">Belongs to the TRAFAC class myosin-kinesin ATPase superfamily. Kinesin family. Unc-104 subfamily.</text>
</comment>
<proteinExistence type="evidence at protein level"/>